<name>HRCA_LACDB</name>
<organism>
    <name type="scientific">Lactobacillus delbrueckii subsp. bulgaricus (strain ATCC BAA-365 / Lb-18)</name>
    <dbReference type="NCBI Taxonomy" id="321956"/>
    <lineage>
        <taxon>Bacteria</taxon>
        <taxon>Bacillati</taxon>
        <taxon>Bacillota</taxon>
        <taxon>Bacilli</taxon>
        <taxon>Lactobacillales</taxon>
        <taxon>Lactobacillaceae</taxon>
        <taxon>Lactobacillus</taxon>
    </lineage>
</organism>
<gene>
    <name evidence="1" type="primary">hrcA</name>
    <name type="ordered locus">LBUL_1229</name>
</gene>
<dbReference type="EMBL" id="CP000412">
    <property type="protein sequence ID" value="ABJ58758.1"/>
    <property type="molecule type" value="Genomic_DNA"/>
</dbReference>
<dbReference type="RefSeq" id="WP_003618616.1">
    <property type="nucleotide sequence ID" value="NC_008529.1"/>
</dbReference>
<dbReference type="SMR" id="Q049W4"/>
<dbReference type="KEGG" id="lbu:LBUL_1229"/>
<dbReference type="HOGENOM" id="CLU_050019_1_0_9"/>
<dbReference type="BioCyc" id="LDEL321956:LBUL_RS05750-MONOMER"/>
<dbReference type="GO" id="GO:0003677">
    <property type="term" value="F:DNA binding"/>
    <property type="evidence" value="ECO:0007669"/>
    <property type="project" value="InterPro"/>
</dbReference>
<dbReference type="GO" id="GO:0045892">
    <property type="term" value="P:negative regulation of DNA-templated transcription"/>
    <property type="evidence" value="ECO:0007669"/>
    <property type="project" value="UniProtKB-UniRule"/>
</dbReference>
<dbReference type="Gene3D" id="3.30.450.40">
    <property type="match status" value="1"/>
</dbReference>
<dbReference type="Gene3D" id="3.30.390.60">
    <property type="entry name" value="Heat-inducible transcription repressor hrca homolog, domain 3"/>
    <property type="match status" value="1"/>
</dbReference>
<dbReference type="Gene3D" id="1.10.10.10">
    <property type="entry name" value="Winged helix-like DNA-binding domain superfamily/Winged helix DNA-binding domain"/>
    <property type="match status" value="1"/>
</dbReference>
<dbReference type="HAMAP" id="MF_00081">
    <property type="entry name" value="HrcA"/>
    <property type="match status" value="1"/>
</dbReference>
<dbReference type="InterPro" id="IPR029016">
    <property type="entry name" value="GAF-like_dom_sf"/>
</dbReference>
<dbReference type="InterPro" id="IPR002571">
    <property type="entry name" value="HrcA"/>
</dbReference>
<dbReference type="InterPro" id="IPR021153">
    <property type="entry name" value="HrcA_C"/>
</dbReference>
<dbReference type="InterPro" id="IPR036388">
    <property type="entry name" value="WH-like_DNA-bd_sf"/>
</dbReference>
<dbReference type="InterPro" id="IPR036390">
    <property type="entry name" value="WH_DNA-bd_sf"/>
</dbReference>
<dbReference type="InterPro" id="IPR005104">
    <property type="entry name" value="WHTH_HrcA_DNA-bd"/>
</dbReference>
<dbReference type="InterPro" id="IPR023120">
    <property type="entry name" value="WHTH_transcript_rep_HrcA_IDD"/>
</dbReference>
<dbReference type="NCBIfam" id="TIGR00331">
    <property type="entry name" value="hrcA"/>
    <property type="match status" value="1"/>
</dbReference>
<dbReference type="PANTHER" id="PTHR34824">
    <property type="entry name" value="HEAT-INDUCIBLE TRANSCRIPTION REPRESSOR HRCA"/>
    <property type="match status" value="1"/>
</dbReference>
<dbReference type="PANTHER" id="PTHR34824:SF1">
    <property type="entry name" value="HEAT-INDUCIBLE TRANSCRIPTION REPRESSOR HRCA"/>
    <property type="match status" value="1"/>
</dbReference>
<dbReference type="Pfam" id="PF01628">
    <property type="entry name" value="HrcA"/>
    <property type="match status" value="1"/>
</dbReference>
<dbReference type="Pfam" id="PF03444">
    <property type="entry name" value="HrcA_DNA-bdg"/>
    <property type="match status" value="1"/>
</dbReference>
<dbReference type="PIRSF" id="PIRSF005485">
    <property type="entry name" value="HrcA"/>
    <property type="match status" value="1"/>
</dbReference>
<dbReference type="SUPFAM" id="SSF55781">
    <property type="entry name" value="GAF domain-like"/>
    <property type="match status" value="1"/>
</dbReference>
<dbReference type="SUPFAM" id="SSF46785">
    <property type="entry name" value="Winged helix' DNA-binding domain"/>
    <property type="match status" value="1"/>
</dbReference>
<reference key="1">
    <citation type="journal article" date="2006" name="Proc. Natl. Acad. Sci. U.S.A.">
        <title>Comparative genomics of the lactic acid bacteria.</title>
        <authorList>
            <person name="Makarova K.S."/>
            <person name="Slesarev A."/>
            <person name="Wolf Y.I."/>
            <person name="Sorokin A."/>
            <person name="Mirkin B."/>
            <person name="Koonin E.V."/>
            <person name="Pavlov A."/>
            <person name="Pavlova N."/>
            <person name="Karamychev V."/>
            <person name="Polouchine N."/>
            <person name="Shakhova V."/>
            <person name="Grigoriev I."/>
            <person name="Lou Y."/>
            <person name="Rohksar D."/>
            <person name="Lucas S."/>
            <person name="Huang K."/>
            <person name="Goodstein D.M."/>
            <person name="Hawkins T."/>
            <person name="Plengvidhya V."/>
            <person name="Welker D."/>
            <person name="Hughes J."/>
            <person name="Goh Y."/>
            <person name="Benson A."/>
            <person name="Baldwin K."/>
            <person name="Lee J.-H."/>
            <person name="Diaz-Muniz I."/>
            <person name="Dosti B."/>
            <person name="Smeianov V."/>
            <person name="Wechter W."/>
            <person name="Barabote R."/>
            <person name="Lorca G."/>
            <person name="Altermann E."/>
            <person name="Barrangou R."/>
            <person name="Ganesan B."/>
            <person name="Xie Y."/>
            <person name="Rawsthorne H."/>
            <person name="Tamir D."/>
            <person name="Parker C."/>
            <person name="Breidt F."/>
            <person name="Broadbent J.R."/>
            <person name="Hutkins R."/>
            <person name="O'Sullivan D."/>
            <person name="Steele J."/>
            <person name="Unlu G."/>
            <person name="Saier M.H. Jr."/>
            <person name="Klaenhammer T."/>
            <person name="Richardson P."/>
            <person name="Kozyavkin S."/>
            <person name="Weimer B.C."/>
            <person name="Mills D.A."/>
        </authorList>
    </citation>
    <scope>NUCLEOTIDE SEQUENCE [LARGE SCALE GENOMIC DNA]</scope>
    <source>
        <strain>ATCC BAA-365 / Lb-18</strain>
    </source>
</reference>
<evidence type="ECO:0000255" key="1">
    <source>
        <dbReference type="HAMAP-Rule" id="MF_00081"/>
    </source>
</evidence>
<feature type="chain" id="PRO_1000010412" description="Heat-inducible transcription repressor HrcA">
    <location>
        <begin position="1"/>
        <end position="347"/>
    </location>
</feature>
<accession>Q049W4</accession>
<protein>
    <recommendedName>
        <fullName evidence="1">Heat-inducible transcription repressor HrcA</fullName>
    </recommendedName>
</protein>
<comment type="function">
    <text evidence="1">Negative regulator of class I heat shock genes (grpE-dnaK-dnaJ and groELS operons). Prevents heat-shock induction of these operons.</text>
</comment>
<comment type="similarity">
    <text evidence="1">Belongs to the HrcA family.</text>
</comment>
<sequence length="347" mass="39216">MLTKRQELILKTIIQDFTKTHEPVGSKTVMNQLSIKVSSATIRNEMAVLEEHGLIEKTHSSSGRVPSTEGYRYYLDNLVQPLQLPEEMYNQIGYQFDQPFNQVDEIVKEAARILSDLTDYTAFAEGPEDKNVSITGFRIVPLAPRQVMAILVISDGSVKNQLYTLPRHISGDEVEQAARLINDQLVGKNLSEINKQTFEQLYSSQIVGKNAPEFLELLESVIKDAASEQMYVDGQLNLLNNIENSDLKAIKSLYELINSSSLAGELIDLSDSPSHYPVHVRLGAELENDLLKDFSLVMAEYSVGRYGRGTIALLGPRHMPYSEMIGLMEYFRQELARKLLDYYGRFK</sequence>
<keyword id="KW-0678">Repressor</keyword>
<keyword id="KW-0346">Stress response</keyword>
<keyword id="KW-0804">Transcription</keyword>
<keyword id="KW-0805">Transcription regulation</keyword>
<proteinExistence type="inferred from homology"/>